<feature type="chain" id="PRO_0000375362" description="YcgL domain-containing protein Spro_2755">
    <location>
        <begin position="1"/>
        <end position="90"/>
    </location>
</feature>
<feature type="domain" description="YcgL" evidence="1">
    <location>
        <begin position="1"/>
        <end position="85"/>
    </location>
</feature>
<reference key="1">
    <citation type="submission" date="2007-09" db="EMBL/GenBank/DDBJ databases">
        <title>Complete sequence of chromosome of Serratia proteamaculans 568.</title>
        <authorList>
            <consortium name="US DOE Joint Genome Institute"/>
            <person name="Copeland A."/>
            <person name="Lucas S."/>
            <person name="Lapidus A."/>
            <person name="Barry K."/>
            <person name="Glavina del Rio T."/>
            <person name="Dalin E."/>
            <person name="Tice H."/>
            <person name="Pitluck S."/>
            <person name="Chain P."/>
            <person name="Malfatti S."/>
            <person name="Shin M."/>
            <person name="Vergez L."/>
            <person name="Schmutz J."/>
            <person name="Larimer F."/>
            <person name="Land M."/>
            <person name="Hauser L."/>
            <person name="Kyrpides N."/>
            <person name="Kim E."/>
            <person name="Taghavi S."/>
            <person name="Newman L."/>
            <person name="Vangronsveld J."/>
            <person name="van der Lelie D."/>
            <person name="Richardson P."/>
        </authorList>
    </citation>
    <scope>NUCLEOTIDE SEQUENCE [LARGE SCALE GENOMIC DNA]</scope>
    <source>
        <strain>568</strain>
    </source>
</reference>
<sequence>MLCVIYRSSKRDQTYLYVEKKDDFSRVPEDLLKSFGTPQLAMVLSLEGREKLASADIEKVKEALKEEGFYLQVPPPLENLLKQHLSDDKK</sequence>
<name>Y2755_SERP5</name>
<gene>
    <name type="ordered locus">Spro_2755</name>
</gene>
<evidence type="ECO:0000255" key="1">
    <source>
        <dbReference type="HAMAP-Rule" id="MF_01866"/>
    </source>
</evidence>
<accession>A8GFG6</accession>
<dbReference type="EMBL" id="CP000826">
    <property type="protein sequence ID" value="ABV41856.1"/>
    <property type="molecule type" value="Genomic_DNA"/>
</dbReference>
<dbReference type="SMR" id="A8GFG6"/>
<dbReference type="STRING" id="399741.Spro_2755"/>
<dbReference type="KEGG" id="spe:Spro_2755"/>
<dbReference type="eggNOG" id="COG3100">
    <property type="taxonomic scope" value="Bacteria"/>
</dbReference>
<dbReference type="HOGENOM" id="CLU_155118_1_0_6"/>
<dbReference type="OrthoDB" id="7062382at2"/>
<dbReference type="Gene3D" id="3.10.510.20">
    <property type="entry name" value="YcgL domain"/>
    <property type="match status" value="1"/>
</dbReference>
<dbReference type="HAMAP" id="MF_01866">
    <property type="entry name" value="UPF0745"/>
    <property type="match status" value="1"/>
</dbReference>
<dbReference type="InterPro" id="IPR038068">
    <property type="entry name" value="YcgL-like_sf"/>
</dbReference>
<dbReference type="InterPro" id="IPR027354">
    <property type="entry name" value="YcgL_dom"/>
</dbReference>
<dbReference type="PANTHER" id="PTHR38109">
    <property type="entry name" value="PROTEIN YCGL"/>
    <property type="match status" value="1"/>
</dbReference>
<dbReference type="PANTHER" id="PTHR38109:SF1">
    <property type="entry name" value="PROTEIN YCGL"/>
    <property type="match status" value="1"/>
</dbReference>
<dbReference type="Pfam" id="PF05166">
    <property type="entry name" value="YcgL"/>
    <property type="match status" value="1"/>
</dbReference>
<dbReference type="SUPFAM" id="SSF160191">
    <property type="entry name" value="YcgL-like"/>
    <property type="match status" value="1"/>
</dbReference>
<dbReference type="PROSITE" id="PS51648">
    <property type="entry name" value="YCGL"/>
    <property type="match status" value="1"/>
</dbReference>
<organism>
    <name type="scientific">Serratia proteamaculans (strain 568)</name>
    <dbReference type="NCBI Taxonomy" id="399741"/>
    <lineage>
        <taxon>Bacteria</taxon>
        <taxon>Pseudomonadati</taxon>
        <taxon>Pseudomonadota</taxon>
        <taxon>Gammaproteobacteria</taxon>
        <taxon>Enterobacterales</taxon>
        <taxon>Yersiniaceae</taxon>
        <taxon>Serratia</taxon>
    </lineage>
</organism>
<proteinExistence type="inferred from homology"/>
<protein>
    <recommendedName>
        <fullName evidence="1">YcgL domain-containing protein Spro_2755</fullName>
    </recommendedName>
</protein>